<comment type="interaction">
    <interactant intactId="EBI-12192919">
        <id>Q6UXS0</id>
    </interactant>
    <interactant intactId="EBI-1993627">
        <id>O94888</id>
        <label>UBXN7</label>
    </interactant>
    <organismsDiffer>false</organismsDiffer>
    <experiments>3</experiments>
</comment>
<comment type="subcellular location">
    <subcellularLocation>
        <location evidence="3">Secreted</location>
    </subcellularLocation>
</comment>
<comment type="alternative products">
    <event type="alternative splicing"/>
    <isoform>
        <id>Q6UXS0-1</id>
        <name>1</name>
        <sequence type="displayed"/>
    </isoform>
    <isoform>
        <id>Q6UXS0-2</id>
        <name>2</name>
        <sequence type="described" ref="VSP_062066 VSP_062067"/>
    </isoform>
</comment>
<keyword id="KW-0025">Alternative splicing</keyword>
<keyword id="KW-1015">Disulfide bond</keyword>
<keyword id="KW-0325">Glycoprotein</keyword>
<keyword id="KW-0430">Lectin</keyword>
<keyword id="KW-1185">Reference proteome</keyword>
<keyword id="KW-0964">Secreted</keyword>
<keyword id="KW-0732">Signal</keyword>
<protein>
    <recommendedName>
        <fullName evidence="3">C-type lectin domain family 19 member A</fullName>
    </recommendedName>
</protein>
<evidence type="ECO:0000255" key="1"/>
<evidence type="ECO:0000255" key="2">
    <source>
        <dbReference type="PROSITE-ProRule" id="PRU00040"/>
    </source>
</evidence>
<evidence type="ECO:0000305" key="3"/>
<evidence type="ECO:0000312" key="4">
    <source>
        <dbReference type="EMBL" id="AAQ88599.1"/>
    </source>
</evidence>
<evidence type="ECO:0000312" key="5">
    <source>
        <dbReference type="HGNC" id="HGNC:34522"/>
    </source>
</evidence>
<sequence>MQRWTLWAAAFLTLHSAQAFPQTDISISPALPELPLPSLCPLFWMEFKGHCYRFFPLNKTWAEADLYCSEFSVGRKSAKLASIHSWEENVFVYDLVNSCVPGIPADVWTGLHDHRQEGQFEWTDGSSYDYSYWDGSQPDDGVHADPEEEDCVQIWYRPTSALRSWNDNTCSRKFPFVCKIPSLTIH</sequence>
<accession>Q6UXS0</accession>
<accession>A0A1B0GV53</accession>
<accession>Q0VF32</accession>
<dbReference type="EMBL" id="AY358232">
    <property type="protein sequence ID" value="AAQ88599.1"/>
    <property type="molecule type" value="mRNA"/>
</dbReference>
<dbReference type="EMBL" id="AC003003">
    <property type="status" value="NOT_ANNOTATED_CDS"/>
    <property type="molecule type" value="Genomic_DNA"/>
</dbReference>
<dbReference type="EMBL" id="AC130456">
    <property type="status" value="NOT_ANNOTATED_CDS"/>
    <property type="molecule type" value="Genomic_DNA"/>
</dbReference>
<dbReference type="EMBL" id="BC119018">
    <property type="status" value="NOT_ANNOTATED_CDS"/>
    <property type="molecule type" value="mRNA"/>
</dbReference>
<dbReference type="CCDS" id="CCDS81953.1">
    <molecule id="Q6UXS0-1"/>
</dbReference>
<dbReference type="RefSeq" id="NP_001243649.1">
    <molecule id="Q6UXS0-1"/>
    <property type="nucleotide sequence ID" value="NM_001256720.2"/>
</dbReference>
<dbReference type="SMR" id="Q6UXS0"/>
<dbReference type="FunCoup" id="Q6UXS0">
    <property type="interactions" value="14"/>
</dbReference>
<dbReference type="IntAct" id="Q6UXS0">
    <property type="interactions" value="1"/>
</dbReference>
<dbReference type="STRING" id="9606.ENSP00000490375"/>
<dbReference type="GlyCosmos" id="Q6UXS0">
    <property type="glycosylation" value="1 site, No reported glycans"/>
</dbReference>
<dbReference type="GlyGen" id="Q6UXS0">
    <property type="glycosylation" value="1 site"/>
</dbReference>
<dbReference type="BioMuta" id="CLEC19A"/>
<dbReference type="DMDM" id="74738256"/>
<dbReference type="PaxDb" id="9606-ENSP00000455948"/>
<dbReference type="PeptideAtlas" id="Q6UXS0"/>
<dbReference type="Antibodypedia" id="66230">
    <property type="antibodies" value="6 antibodies from 6 providers"/>
</dbReference>
<dbReference type="DNASU" id="728276"/>
<dbReference type="Ensembl" id="ENST00000465414.1">
    <molecule id="Q6UXS0-2"/>
    <property type="protein sequence ID" value="ENSP00000455948.1"/>
    <property type="gene ID" value="ENSG00000261210.8"/>
</dbReference>
<dbReference type="Ensembl" id="ENST00000636231.2">
    <molecule id="Q6UXS0-1"/>
    <property type="protein sequence ID" value="ENSP00000490375.1"/>
    <property type="gene ID" value="ENSG00000261210.8"/>
</dbReference>
<dbReference type="GeneID" id="728276"/>
<dbReference type="KEGG" id="hsa:728276"/>
<dbReference type="MANE-Select" id="ENST00000636231.2">
    <property type="protein sequence ID" value="ENSP00000490375.1"/>
    <property type="RefSeq nucleotide sequence ID" value="NM_001256720.2"/>
    <property type="RefSeq protein sequence ID" value="NP_001243649.1"/>
</dbReference>
<dbReference type="UCSC" id="uc002dga.6">
    <molecule id="Q6UXS0-1"/>
    <property type="organism name" value="human"/>
</dbReference>
<dbReference type="AGR" id="HGNC:34522"/>
<dbReference type="CTD" id="728276"/>
<dbReference type="DisGeNET" id="728276"/>
<dbReference type="GeneCards" id="CLEC19A"/>
<dbReference type="HGNC" id="HGNC:34522">
    <property type="gene designation" value="CLEC19A"/>
</dbReference>
<dbReference type="HPA" id="ENSG00000261210">
    <property type="expression patterns" value="Tissue enhanced (brain)"/>
</dbReference>
<dbReference type="neXtProt" id="NX_Q6UXS0"/>
<dbReference type="OpenTargets" id="ENSG00000261210"/>
<dbReference type="VEuPathDB" id="HostDB:ENSG00000261210"/>
<dbReference type="eggNOG" id="KOG4297">
    <property type="taxonomic scope" value="Eukaryota"/>
</dbReference>
<dbReference type="GeneTree" id="ENSGT00940000163133"/>
<dbReference type="HOGENOM" id="CLU_2066807_0_0_1"/>
<dbReference type="InParanoid" id="Q6UXS0"/>
<dbReference type="OMA" id="VQIWYRY"/>
<dbReference type="OrthoDB" id="418245at2759"/>
<dbReference type="PAN-GO" id="Q6UXS0">
    <property type="GO annotations" value="3 GO annotations based on evolutionary models"/>
</dbReference>
<dbReference type="PhylomeDB" id="Q6UXS0"/>
<dbReference type="TreeFam" id="TF344047"/>
<dbReference type="PathwayCommons" id="Q6UXS0"/>
<dbReference type="SignaLink" id="Q6UXS0"/>
<dbReference type="BioGRID-ORCS" id="728276">
    <property type="hits" value="13 hits in 383 CRISPR screens"/>
</dbReference>
<dbReference type="ChiTaRS" id="CLEC19A">
    <property type="organism name" value="human"/>
</dbReference>
<dbReference type="GenomeRNAi" id="728276"/>
<dbReference type="Pharos" id="Q6UXS0">
    <property type="development level" value="Tdark"/>
</dbReference>
<dbReference type="PRO" id="PR:Q6UXS0"/>
<dbReference type="Proteomes" id="UP000005640">
    <property type="component" value="Chromosome 16"/>
</dbReference>
<dbReference type="RNAct" id="Q6UXS0">
    <property type="molecule type" value="protein"/>
</dbReference>
<dbReference type="Bgee" id="ENSG00000261210">
    <property type="expression patterns" value="Expressed in right uterine tube and 47 other cell types or tissues"/>
</dbReference>
<dbReference type="ExpressionAtlas" id="Q6UXS0">
    <property type="expression patterns" value="baseline and differential"/>
</dbReference>
<dbReference type="GO" id="GO:0005576">
    <property type="term" value="C:extracellular region"/>
    <property type="evidence" value="ECO:0007669"/>
    <property type="project" value="UniProtKB-SubCell"/>
</dbReference>
<dbReference type="GO" id="GO:0030246">
    <property type="term" value="F:carbohydrate binding"/>
    <property type="evidence" value="ECO:0007669"/>
    <property type="project" value="UniProtKB-KW"/>
</dbReference>
<dbReference type="CDD" id="cd03589">
    <property type="entry name" value="CLECT_CEL-1_like"/>
    <property type="match status" value="1"/>
</dbReference>
<dbReference type="FunFam" id="3.10.100.10:FF:000076">
    <property type="entry name" value="C-type lectin domain family 19 member A"/>
    <property type="match status" value="1"/>
</dbReference>
<dbReference type="Gene3D" id="3.10.100.10">
    <property type="entry name" value="Mannose-Binding Protein A, subunit A"/>
    <property type="match status" value="1"/>
</dbReference>
<dbReference type="InterPro" id="IPR001304">
    <property type="entry name" value="C-type_lectin-like"/>
</dbReference>
<dbReference type="InterPro" id="IPR016186">
    <property type="entry name" value="C-type_lectin-like/link_sf"/>
</dbReference>
<dbReference type="InterPro" id="IPR050111">
    <property type="entry name" value="C-type_lectin/snaclec_domain"/>
</dbReference>
<dbReference type="InterPro" id="IPR018378">
    <property type="entry name" value="C-type_lectin_CS"/>
</dbReference>
<dbReference type="InterPro" id="IPR033988">
    <property type="entry name" value="CEL1-like_CTLD"/>
</dbReference>
<dbReference type="InterPro" id="IPR016187">
    <property type="entry name" value="CTDL_fold"/>
</dbReference>
<dbReference type="PANTHER" id="PTHR22803">
    <property type="entry name" value="MANNOSE, PHOSPHOLIPASE, LECTIN RECEPTOR RELATED"/>
    <property type="match status" value="1"/>
</dbReference>
<dbReference type="Pfam" id="PF00059">
    <property type="entry name" value="Lectin_C"/>
    <property type="match status" value="1"/>
</dbReference>
<dbReference type="PRINTS" id="PR01504">
    <property type="entry name" value="PNCREATITSAP"/>
</dbReference>
<dbReference type="SMART" id="SM00034">
    <property type="entry name" value="CLECT"/>
    <property type="match status" value="1"/>
</dbReference>
<dbReference type="SUPFAM" id="SSF56436">
    <property type="entry name" value="C-type lectin-like"/>
    <property type="match status" value="1"/>
</dbReference>
<dbReference type="PROSITE" id="PS50041">
    <property type="entry name" value="C_TYPE_LECTIN_2"/>
    <property type="match status" value="1"/>
</dbReference>
<organism>
    <name type="scientific">Homo sapiens</name>
    <name type="common">Human</name>
    <dbReference type="NCBI Taxonomy" id="9606"/>
    <lineage>
        <taxon>Eukaryota</taxon>
        <taxon>Metazoa</taxon>
        <taxon>Chordata</taxon>
        <taxon>Craniata</taxon>
        <taxon>Vertebrata</taxon>
        <taxon>Euteleostomi</taxon>
        <taxon>Mammalia</taxon>
        <taxon>Eutheria</taxon>
        <taxon>Euarchontoglires</taxon>
        <taxon>Primates</taxon>
        <taxon>Haplorrhini</taxon>
        <taxon>Catarrhini</taxon>
        <taxon>Hominidae</taxon>
        <taxon>Homo</taxon>
    </lineage>
</organism>
<reference key="1">
    <citation type="journal article" date="2003" name="Genome Res.">
        <title>The secreted protein discovery initiative (SPDI), a large-scale effort to identify novel human secreted and transmembrane proteins: a bioinformatics assessment.</title>
        <authorList>
            <person name="Clark H.F."/>
            <person name="Gurney A.L."/>
            <person name="Abaya E."/>
            <person name="Baker K."/>
            <person name="Baldwin D.T."/>
            <person name="Brush J."/>
            <person name="Chen J."/>
            <person name="Chow B."/>
            <person name="Chui C."/>
            <person name="Crowley C."/>
            <person name="Currell B."/>
            <person name="Deuel B."/>
            <person name="Dowd P."/>
            <person name="Eaton D."/>
            <person name="Foster J.S."/>
            <person name="Grimaldi C."/>
            <person name="Gu Q."/>
            <person name="Hass P.E."/>
            <person name="Heldens S."/>
            <person name="Huang A."/>
            <person name="Kim H.S."/>
            <person name="Klimowski L."/>
            <person name="Jin Y."/>
            <person name="Johnson S."/>
            <person name="Lee J."/>
            <person name="Lewis L."/>
            <person name="Liao D."/>
            <person name="Mark M.R."/>
            <person name="Robbie E."/>
            <person name="Sanchez C."/>
            <person name="Schoenfeld J."/>
            <person name="Seshagiri S."/>
            <person name="Simmons L."/>
            <person name="Singh J."/>
            <person name="Smith V."/>
            <person name="Stinson J."/>
            <person name="Vagts A."/>
            <person name="Vandlen R.L."/>
            <person name="Watanabe C."/>
            <person name="Wieand D."/>
            <person name="Woods K."/>
            <person name="Xie M.-H."/>
            <person name="Yansura D.G."/>
            <person name="Yi S."/>
            <person name="Yu G."/>
            <person name="Yuan J."/>
            <person name="Zhang M."/>
            <person name="Zhang Z."/>
            <person name="Goddard A.D."/>
            <person name="Wood W.I."/>
            <person name="Godowski P.J."/>
            <person name="Gray A.M."/>
        </authorList>
    </citation>
    <scope>NUCLEOTIDE SEQUENCE [LARGE SCALE MRNA] (ISOFORM 2)</scope>
</reference>
<reference key="2">
    <citation type="journal article" date="2004" name="Nature">
        <title>The sequence and analysis of duplication-rich human chromosome 16.</title>
        <authorList>
            <person name="Martin J."/>
            <person name="Han C."/>
            <person name="Gordon L.A."/>
            <person name="Terry A."/>
            <person name="Prabhakar S."/>
            <person name="She X."/>
            <person name="Xie G."/>
            <person name="Hellsten U."/>
            <person name="Chan Y.M."/>
            <person name="Altherr M."/>
            <person name="Couronne O."/>
            <person name="Aerts A."/>
            <person name="Bajorek E."/>
            <person name="Black S."/>
            <person name="Blumer H."/>
            <person name="Branscomb E."/>
            <person name="Brown N.C."/>
            <person name="Bruno W.J."/>
            <person name="Buckingham J.M."/>
            <person name="Callen D.F."/>
            <person name="Campbell C.S."/>
            <person name="Campbell M.L."/>
            <person name="Campbell E.W."/>
            <person name="Caoile C."/>
            <person name="Challacombe J.F."/>
            <person name="Chasteen L.A."/>
            <person name="Chertkov O."/>
            <person name="Chi H.C."/>
            <person name="Christensen M."/>
            <person name="Clark L.M."/>
            <person name="Cohn J.D."/>
            <person name="Denys M."/>
            <person name="Detter J.C."/>
            <person name="Dickson M."/>
            <person name="Dimitrijevic-Bussod M."/>
            <person name="Escobar J."/>
            <person name="Fawcett J.J."/>
            <person name="Flowers D."/>
            <person name="Fotopulos D."/>
            <person name="Glavina T."/>
            <person name="Gomez M."/>
            <person name="Gonzales E."/>
            <person name="Goodstein D."/>
            <person name="Goodwin L.A."/>
            <person name="Grady D.L."/>
            <person name="Grigoriev I."/>
            <person name="Groza M."/>
            <person name="Hammon N."/>
            <person name="Hawkins T."/>
            <person name="Haydu L."/>
            <person name="Hildebrand C.E."/>
            <person name="Huang W."/>
            <person name="Israni S."/>
            <person name="Jett J."/>
            <person name="Jewett P.B."/>
            <person name="Kadner K."/>
            <person name="Kimball H."/>
            <person name="Kobayashi A."/>
            <person name="Krawczyk M.-C."/>
            <person name="Leyba T."/>
            <person name="Longmire J.L."/>
            <person name="Lopez F."/>
            <person name="Lou Y."/>
            <person name="Lowry S."/>
            <person name="Ludeman T."/>
            <person name="Manohar C.F."/>
            <person name="Mark G.A."/>
            <person name="McMurray K.L."/>
            <person name="Meincke L.J."/>
            <person name="Morgan J."/>
            <person name="Moyzis R.K."/>
            <person name="Mundt M.O."/>
            <person name="Munk A.C."/>
            <person name="Nandkeshwar R.D."/>
            <person name="Pitluck S."/>
            <person name="Pollard M."/>
            <person name="Predki P."/>
            <person name="Parson-Quintana B."/>
            <person name="Ramirez L."/>
            <person name="Rash S."/>
            <person name="Retterer J."/>
            <person name="Ricke D.O."/>
            <person name="Robinson D.L."/>
            <person name="Rodriguez A."/>
            <person name="Salamov A."/>
            <person name="Saunders E.H."/>
            <person name="Scott D."/>
            <person name="Shough T."/>
            <person name="Stallings R.L."/>
            <person name="Stalvey M."/>
            <person name="Sutherland R.D."/>
            <person name="Tapia R."/>
            <person name="Tesmer J.G."/>
            <person name="Thayer N."/>
            <person name="Thompson L.S."/>
            <person name="Tice H."/>
            <person name="Torney D.C."/>
            <person name="Tran-Gyamfi M."/>
            <person name="Tsai M."/>
            <person name="Ulanovsky L.E."/>
            <person name="Ustaszewska A."/>
            <person name="Vo N."/>
            <person name="White P.S."/>
            <person name="Williams A.L."/>
            <person name="Wills P.L."/>
            <person name="Wu J.-R."/>
            <person name="Wu K."/>
            <person name="Yang J."/>
            <person name="DeJong P."/>
            <person name="Bruce D."/>
            <person name="Doggett N.A."/>
            <person name="Deaven L."/>
            <person name="Schmutz J."/>
            <person name="Grimwood J."/>
            <person name="Richardson P."/>
            <person name="Rokhsar D.S."/>
            <person name="Eichler E.E."/>
            <person name="Gilna P."/>
            <person name="Lucas S.M."/>
            <person name="Myers R.M."/>
            <person name="Rubin E.M."/>
            <person name="Pennacchio L.A."/>
        </authorList>
    </citation>
    <scope>NUCLEOTIDE SEQUENCE [LARGE SCALE GENOMIC DNA]</scope>
</reference>
<reference key="3">
    <citation type="journal article" date="2004" name="Genome Res.">
        <title>The status, quality, and expansion of the NIH full-length cDNA project: the Mammalian Gene Collection (MGC).</title>
        <authorList>
            <consortium name="The MGC Project Team"/>
        </authorList>
    </citation>
    <scope>NUCLEOTIDE SEQUENCE [LARGE SCALE MRNA] (ISOFORM 2)</scope>
</reference>
<feature type="signal peptide" evidence="1">
    <location>
        <begin position="1"/>
        <end position="19"/>
    </location>
</feature>
<feature type="chain" id="PRO_0000317515" description="C-type lectin domain family 19 member A">
    <location>
        <begin position="20"/>
        <end position="186"/>
    </location>
</feature>
<feature type="domain" description="C-type lectin" evidence="2">
    <location>
        <begin position="47"/>
        <end position="179"/>
    </location>
</feature>
<feature type="glycosylation site" description="N-linked (GlcNAc...) asparagine" evidence="1">
    <location>
        <position position="58"/>
    </location>
</feature>
<feature type="disulfide bond" evidence="2">
    <location>
        <begin position="68"/>
        <end position="178"/>
    </location>
</feature>
<feature type="disulfide bond" evidence="2">
    <location>
        <begin position="151"/>
        <end position="170"/>
    </location>
</feature>
<feature type="splice variant" id="VSP_062066" description="In isoform 2.">
    <original>EGQFEWTDGSSYDYSYWDGS</original>
    <variation>VRKQWPLGPLGSSSQDSILI</variation>
    <location>
        <begin position="117"/>
        <end position="136"/>
    </location>
</feature>
<feature type="splice variant" id="VSP_062067" description="In isoform 2.">
    <location>
        <begin position="137"/>
        <end position="186"/>
    </location>
</feature>
<feature type="sequence conflict" description="In Ref. 3; BC119018." evidence="3" ref="3">
    <original>S</original>
    <variation>A</variation>
    <location>
        <position position="16"/>
    </location>
</feature>
<name>CL19A_HUMAN</name>
<proteinExistence type="evidence at protein level"/>
<gene>
    <name evidence="5" type="primary">CLEC19A</name>
    <name evidence="4" type="ORF">UNQ5810/PRO19627</name>
</gene>